<comment type="function">
    <text evidence="1">Extracellular metalloprotease that contributes to pathogenicity.</text>
</comment>
<comment type="cofactor">
    <cofactor evidence="1">
        <name>Zn(2+)</name>
        <dbReference type="ChEBI" id="CHEBI:29105"/>
    </cofactor>
    <text evidence="1">Binds 1 zinc ion per subunit.</text>
</comment>
<comment type="subcellular location">
    <subcellularLocation>
        <location evidence="1">Secreted</location>
    </subcellularLocation>
</comment>
<comment type="similarity">
    <text evidence="4">Belongs to the peptidase M14 family.</text>
</comment>
<organism>
    <name type="scientific">Arthroderma otae (strain ATCC MYA-4605 / CBS 113480)</name>
    <name type="common">Microsporum canis</name>
    <dbReference type="NCBI Taxonomy" id="554155"/>
    <lineage>
        <taxon>Eukaryota</taxon>
        <taxon>Fungi</taxon>
        <taxon>Dikarya</taxon>
        <taxon>Ascomycota</taxon>
        <taxon>Pezizomycotina</taxon>
        <taxon>Eurotiomycetes</taxon>
        <taxon>Eurotiomycetidae</taxon>
        <taxon>Onygenales</taxon>
        <taxon>Arthrodermataceae</taxon>
        <taxon>Microsporum</taxon>
    </lineage>
</organism>
<dbReference type="EC" id="3.4.17.-"/>
<dbReference type="EMBL" id="DS995706">
    <property type="protein sequence ID" value="EEQ33970.1"/>
    <property type="molecule type" value="Genomic_DNA"/>
</dbReference>
<dbReference type="RefSeq" id="XP_002844825.1">
    <property type="nucleotide sequence ID" value="XM_002844779.1"/>
</dbReference>
<dbReference type="SMR" id="C5FVN6"/>
<dbReference type="STRING" id="554155.C5FVN6"/>
<dbReference type="MEROPS" id="M14.014"/>
<dbReference type="GeneID" id="9222215"/>
<dbReference type="VEuPathDB" id="FungiDB:MCYG_06789"/>
<dbReference type="eggNOG" id="KOG2650">
    <property type="taxonomic scope" value="Eukaryota"/>
</dbReference>
<dbReference type="HOGENOM" id="CLU_019326_1_1_1"/>
<dbReference type="OMA" id="PPNHKDL"/>
<dbReference type="OrthoDB" id="3626597at2759"/>
<dbReference type="Proteomes" id="UP000002035">
    <property type="component" value="Unassembled WGS sequence"/>
</dbReference>
<dbReference type="GO" id="GO:0005576">
    <property type="term" value="C:extracellular region"/>
    <property type="evidence" value="ECO:0007669"/>
    <property type="project" value="UniProtKB-SubCell"/>
</dbReference>
<dbReference type="GO" id="GO:0004181">
    <property type="term" value="F:metallocarboxypeptidase activity"/>
    <property type="evidence" value="ECO:0007669"/>
    <property type="project" value="InterPro"/>
</dbReference>
<dbReference type="GO" id="GO:0008270">
    <property type="term" value="F:zinc ion binding"/>
    <property type="evidence" value="ECO:0007669"/>
    <property type="project" value="InterPro"/>
</dbReference>
<dbReference type="GO" id="GO:0006508">
    <property type="term" value="P:proteolysis"/>
    <property type="evidence" value="ECO:0007669"/>
    <property type="project" value="UniProtKB-KW"/>
</dbReference>
<dbReference type="CDD" id="cd03860">
    <property type="entry name" value="M14_CP_A-B_like"/>
    <property type="match status" value="1"/>
</dbReference>
<dbReference type="FunFam" id="3.40.630.10:FF:000040">
    <property type="entry name" value="zinc carboxypeptidase"/>
    <property type="match status" value="1"/>
</dbReference>
<dbReference type="Gene3D" id="3.30.70.340">
    <property type="entry name" value="Metallocarboxypeptidase-like"/>
    <property type="match status" value="1"/>
</dbReference>
<dbReference type="Gene3D" id="3.40.630.10">
    <property type="entry name" value="Zn peptidases"/>
    <property type="match status" value="1"/>
</dbReference>
<dbReference type="InterPro" id="IPR036990">
    <property type="entry name" value="M14A-like_propep"/>
</dbReference>
<dbReference type="InterPro" id="IPR003146">
    <property type="entry name" value="M14A_act_pep"/>
</dbReference>
<dbReference type="InterPro" id="IPR000834">
    <property type="entry name" value="Peptidase_M14"/>
</dbReference>
<dbReference type="PANTHER" id="PTHR11705">
    <property type="entry name" value="PROTEASE FAMILY M14 CARBOXYPEPTIDASE A,B"/>
    <property type="match status" value="1"/>
</dbReference>
<dbReference type="PANTHER" id="PTHR11705:SF143">
    <property type="entry name" value="SLL0236 PROTEIN"/>
    <property type="match status" value="1"/>
</dbReference>
<dbReference type="Pfam" id="PF00246">
    <property type="entry name" value="Peptidase_M14"/>
    <property type="match status" value="1"/>
</dbReference>
<dbReference type="Pfam" id="PF02244">
    <property type="entry name" value="Propep_M14"/>
    <property type="match status" value="1"/>
</dbReference>
<dbReference type="PRINTS" id="PR00765">
    <property type="entry name" value="CRBOXYPTASEA"/>
</dbReference>
<dbReference type="SMART" id="SM00631">
    <property type="entry name" value="Zn_pept"/>
    <property type="match status" value="1"/>
</dbReference>
<dbReference type="SUPFAM" id="SSF54897">
    <property type="entry name" value="Protease propeptides/inhibitors"/>
    <property type="match status" value="1"/>
</dbReference>
<dbReference type="SUPFAM" id="SSF53187">
    <property type="entry name" value="Zn-dependent exopeptidases"/>
    <property type="match status" value="1"/>
</dbReference>
<dbReference type="PROSITE" id="PS00132">
    <property type="entry name" value="CARBOXYPEPT_ZN_1"/>
    <property type="match status" value="1"/>
</dbReference>
<dbReference type="PROSITE" id="PS52035">
    <property type="entry name" value="PEPTIDASE_M14"/>
    <property type="match status" value="1"/>
</dbReference>
<protein>
    <recommendedName>
        <fullName>Metallocarboxypeptidase A</fullName>
        <shortName>MCPA</shortName>
        <ecNumber>3.4.17.-</ecNumber>
    </recommendedName>
    <alternativeName>
        <fullName>Carboxypeptidase M14A</fullName>
    </alternativeName>
</protein>
<reference key="1">
    <citation type="journal article" date="2012" name="MBio">
        <title>Comparative genome analysis of Trichophyton rubrum and related dermatophytes reveals candidate genes involved in infection.</title>
        <authorList>
            <person name="Martinez D.A."/>
            <person name="Oliver B.G."/>
            <person name="Graeser Y."/>
            <person name="Goldberg J.M."/>
            <person name="Li W."/>
            <person name="Martinez-Rossi N.M."/>
            <person name="Monod M."/>
            <person name="Shelest E."/>
            <person name="Barton R.C."/>
            <person name="Birch E."/>
            <person name="Brakhage A.A."/>
            <person name="Chen Z."/>
            <person name="Gurr S.J."/>
            <person name="Heiman D."/>
            <person name="Heitman J."/>
            <person name="Kosti I."/>
            <person name="Rossi A."/>
            <person name="Saif S."/>
            <person name="Samalova M."/>
            <person name="Saunders C.W."/>
            <person name="Shea T."/>
            <person name="Summerbell R.C."/>
            <person name="Xu J."/>
            <person name="Young S."/>
            <person name="Zeng Q."/>
            <person name="Birren B.W."/>
            <person name="Cuomo C.A."/>
            <person name="White T.C."/>
        </authorList>
    </citation>
    <scope>NUCLEOTIDE SEQUENCE [LARGE SCALE GENOMIC DNA]</scope>
    <source>
        <strain>ATCC MYA-4605 / CBS 113480</strain>
    </source>
</reference>
<feature type="signal peptide" evidence="2">
    <location>
        <begin position="1"/>
        <end position="17"/>
    </location>
</feature>
<feature type="propeptide" id="PRO_0000384101" description="Activation peptide" evidence="1">
    <location>
        <begin position="18"/>
        <end position="112"/>
    </location>
</feature>
<feature type="chain" id="PRO_0000384102" description="Metallocarboxypeptidase A">
    <location>
        <begin position="113"/>
        <end position="422"/>
    </location>
</feature>
<feature type="domain" description="Peptidase M14" evidence="3">
    <location>
        <begin position="119"/>
        <end position="419"/>
    </location>
</feature>
<feature type="active site" description="Proton donor/acceptor" evidence="3">
    <location>
        <position position="385"/>
    </location>
</feature>
<feature type="binding site" evidence="1">
    <location>
        <begin position="179"/>
        <end position="182"/>
    </location>
    <ligand>
        <name>substrate</name>
    </ligand>
</feature>
<feature type="binding site" evidence="3">
    <location>
        <position position="179"/>
    </location>
    <ligand>
        <name>Zn(2+)</name>
        <dbReference type="ChEBI" id="CHEBI:29105"/>
        <note>catalytic</note>
    </ligand>
</feature>
<feature type="binding site" evidence="3">
    <location>
        <position position="182"/>
    </location>
    <ligand>
        <name>Zn(2+)</name>
        <dbReference type="ChEBI" id="CHEBI:29105"/>
        <note>catalytic</note>
    </ligand>
</feature>
<feature type="binding site" evidence="1">
    <location>
        <position position="237"/>
    </location>
    <ligand>
        <name>substrate</name>
    </ligand>
</feature>
<feature type="binding site" evidence="1">
    <location>
        <begin position="254"/>
        <end position="255"/>
    </location>
    <ligand>
        <name>substrate</name>
    </ligand>
</feature>
<feature type="binding site" evidence="3">
    <location>
        <position position="309"/>
    </location>
    <ligand>
        <name>Zn(2+)</name>
        <dbReference type="ChEBI" id="CHEBI:29105"/>
        <note>catalytic</note>
    </ligand>
</feature>
<feature type="binding site" evidence="1">
    <location>
        <begin position="310"/>
        <end position="311"/>
    </location>
    <ligand>
        <name>substrate</name>
    </ligand>
</feature>
<feature type="disulfide bond" evidence="1">
    <location>
        <begin position="248"/>
        <end position="271"/>
    </location>
</feature>
<gene>
    <name type="primary">MCPA</name>
    <name type="ORF">MCYG_06789</name>
</gene>
<keyword id="KW-0121">Carboxypeptidase</keyword>
<keyword id="KW-1015">Disulfide bond</keyword>
<keyword id="KW-0378">Hydrolase</keyword>
<keyword id="KW-0479">Metal-binding</keyword>
<keyword id="KW-0482">Metalloprotease</keyword>
<keyword id="KW-0645">Protease</keyword>
<keyword id="KW-1185">Reference proteome</keyword>
<keyword id="KW-0964">Secreted</keyword>
<keyword id="KW-0732">Signal</keyword>
<keyword id="KW-0843">Virulence</keyword>
<keyword id="KW-0862">Zinc</keyword>
<keyword id="KW-0865">Zymogen</keyword>
<accession>C5FVN6</accession>
<evidence type="ECO:0000250" key="1"/>
<evidence type="ECO:0000255" key="2"/>
<evidence type="ECO:0000255" key="3">
    <source>
        <dbReference type="PROSITE-ProRule" id="PRU01379"/>
    </source>
</evidence>
<evidence type="ECO:0000305" key="4"/>
<proteinExistence type="inferred from homology"/>
<name>MCPA_ARTOC</name>
<sequence>MRSVLSFALLAANVVSAAVLAPFDYSGYKVVRVPTQKGNVKEVQRIITDLNLDTWKYPKAEGQNADIVIPPSQIPSFMERISGMDREIMHEDLGMSISNETTFEAYSAGYAPDINWFKSYHSYQDHLSYLQDLQGLFRTRSEYVDAGKSHEGRTIPALHLWGKGGKNSKPAIIFHGTIHAREWITTMVTEYMAWSFLSEYNKNADITSIVDNFDIWIFPIVNPDGFAYTQTSNRLWRKNRQPNPGARCPGRDLNRNYPYQWVGPGSSSNPCSDIYRGAEAGDGTEIKVHIANMKKIAAYKGIAMFVDWHSYGQLFMSPYGYSCTARPPTDARHQELSRIFAQALKAVHGTPYKTGPICSTIYQVNGDSVDWALEVLKVKLSLTAELRDTGARGFVLPADQILPSGEETLAGTVAMLKAVIKG</sequence>